<keyword id="KW-0687">Ribonucleoprotein</keyword>
<keyword id="KW-0689">Ribosomal protein</keyword>
<reference key="1">
    <citation type="journal article" date="2006" name="Proc. Natl. Acad. Sci. U.S.A.">
        <title>Genome reduction in Leptospira borgpetersenii reflects limited transmission potential.</title>
        <authorList>
            <person name="Bulach D.M."/>
            <person name="Zuerner R.L."/>
            <person name="Wilson P."/>
            <person name="Seemann T."/>
            <person name="McGrath A."/>
            <person name="Cullen P.A."/>
            <person name="Davis J."/>
            <person name="Johnson M."/>
            <person name="Kuczek E."/>
            <person name="Alt D.P."/>
            <person name="Peterson-Burch B."/>
            <person name="Coppel R.L."/>
            <person name="Rood J.I."/>
            <person name="Davies J.K."/>
            <person name="Adler B."/>
        </authorList>
    </citation>
    <scope>NUCLEOTIDE SEQUENCE [LARGE SCALE GENOMIC DNA]</scope>
    <source>
        <strain>JB197</strain>
    </source>
</reference>
<proteinExistence type="inferred from homology"/>
<dbReference type="EMBL" id="CP000350">
    <property type="protein sequence ID" value="ABJ75565.1"/>
    <property type="molecule type" value="Genomic_DNA"/>
</dbReference>
<dbReference type="RefSeq" id="WP_002765180.1">
    <property type="nucleotide sequence ID" value="NC_008510.1"/>
</dbReference>
<dbReference type="SMR" id="Q04U55"/>
<dbReference type="GeneID" id="61174781"/>
<dbReference type="KEGG" id="lbj:LBJ_0921"/>
<dbReference type="HOGENOM" id="CLU_169643_1_1_12"/>
<dbReference type="Proteomes" id="UP000000656">
    <property type="component" value="Chromosome 1"/>
</dbReference>
<dbReference type="GO" id="GO:0022625">
    <property type="term" value="C:cytosolic large ribosomal subunit"/>
    <property type="evidence" value="ECO:0007669"/>
    <property type="project" value="TreeGrafter"/>
</dbReference>
<dbReference type="GO" id="GO:0003735">
    <property type="term" value="F:structural constituent of ribosome"/>
    <property type="evidence" value="ECO:0007669"/>
    <property type="project" value="InterPro"/>
</dbReference>
<dbReference type="GO" id="GO:0006412">
    <property type="term" value="P:translation"/>
    <property type="evidence" value="ECO:0007669"/>
    <property type="project" value="UniProtKB-UniRule"/>
</dbReference>
<dbReference type="FunFam" id="4.10.410.60:FF:000001">
    <property type="entry name" value="50S ribosomal protein L35"/>
    <property type="match status" value="1"/>
</dbReference>
<dbReference type="Gene3D" id="4.10.410.60">
    <property type="match status" value="1"/>
</dbReference>
<dbReference type="HAMAP" id="MF_00514">
    <property type="entry name" value="Ribosomal_bL35"/>
    <property type="match status" value="1"/>
</dbReference>
<dbReference type="InterPro" id="IPR001706">
    <property type="entry name" value="Ribosomal_bL35"/>
</dbReference>
<dbReference type="InterPro" id="IPR021137">
    <property type="entry name" value="Ribosomal_bL35-like"/>
</dbReference>
<dbReference type="InterPro" id="IPR018265">
    <property type="entry name" value="Ribosomal_bL35_CS"/>
</dbReference>
<dbReference type="InterPro" id="IPR037229">
    <property type="entry name" value="Ribosomal_bL35_sf"/>
</dbReference>
<dbReference type="NCBIfam" id="TIGR00001">
    <property type="entry name" value="rpmI_bact"/>
    <property type="match status" value="1"/>
</dbReference>
<dbReference type="PANTHER" id="PTHR33343">
    <property type="entry name" value="54S RIBOSOMAL PROTEIN BL35M"/>
    <property type="match status" value="1"/>
</dbReference>
<dbReference type="PANTHER" id="PTHR33343:SF1">
    <property type="entry name" value="LARGE RIBOSOMAL SUBUNIT PROTEIN BL35M"/>
    <property type="match status" value="1"/>
</dbReference>
<dbReference type="Pfam" id="PF01632">
    <property type="entry name" value="Ribosomal_L35p"/>
    <property type="match status" value="1"/>
</dbReference>
<dbReference type="PRINTS" id="PR00064">
    <property type="entry name" value="RIBOSOMALL35"/>
</dbReference>
<dbReference type="SUPFAM" id="SSF143034">
    <property type="entry name" value="L35p-like"/>
    <property type="match status" value="1"/>
</dbReference>
<dbReference type="PROSITE" id="PS00936">
    <property type="entry name" value="RIBOSOMAL_L35"/>
    <property type="match status" value="1"/>
</dbReference>
<name>RL35_LEPBJ</name>
<accession>Q04U55</accession>
<comment type="similarity">
    <text evidence="1">Belongs to the bacterial ribosomal protein bL35 family.</text>
</comment>
<feature type="chain" id="PRO_1000050709" description="Large ribosomal subunit protein bL35">
    <location>
        <begin position="1"/>
        <end position="67"/>
    </location>
</feature>
<protein>
    <recommendedName>
        <fullName evidence="1">Large ribosomal subunit protein bL35</fullName>
    </recommendedName>
    <alternativeName>
        <fullName evidence="2">50S ribosomal protein L35</fullName>
    </alternativeName>
</protein>
<evidence type="ECO:0000255" key="1">
    <source>
        <dbReference type="HAMAP-Rule" id="MF_00514"/>
    </source>
</evidence>
<evidence type="ECO:0000305" key="2"/>
<organism>
    <name type="scientific">Leptospira borgpetersenii serovar Hardjo-bovis (strain JB197)</name>
    <dbReference type="NCBI Taxonomy" id="355277"/>
    <lineage>
        <taxon>Bacteria</taxon>
        <taxon>Pseudomonadati</taxon>
        <taxon>Spirochaetota</taxon>
        <taxon>Spirochaetia</taxon>
        <taxon>Leptospirales</taxon>
        <taxon>Leptospiraceae</taxon>
        <taxon>Leptospira</taxon>
    </lineage>
</organism>
<gene>
    <name evidence="1" type="primary">rpmI</name>
    <name type="ordered locus">LBJ_0921</name>
</gene>
<sequence length="67" mass="8007">MPKLKTNRAAAKRFKFTKNNKIKRKSMNTRHILTKKGPKRRRRLRGLTLVNNSDWKSIVRLMPYGVR</sequence>